<keyword id="KW-0997">Cell inner membrane</keyword>
<keyword id="KW-1003">Cell membrane</keyword>
<keyword id="KW-0441">Lipid A biosynthesis</keyword>
<keyword id="KW-0444">Lipid biosynthesis</keyword>
<keyword id="KW-0443">Lipid metabolism</keyword>
<keyword id="KW-0448">Lipopolysaccharide biosynthesis</keyword>
<keyword id="KW-0472">Membrane</keyword>
<keyword id="KW-1185">Reference proteome</keyword>
<keyword id="KW-0812">Transmembrane</keyword>
<keyword id="KW-1133">Transmembrane helix</keyword>
<keyword id="KW-0813">Transport</keyword>
<name>ARNE_SHIB3</name>
<comment type="function">
    <text evidence="1">Translocates 4-amino-4-deoxy-L-arabinose-phosphoundecaprenol (alpha-L-Ara4N-phosphoundecaprenol) from the cytoplasmic to the periplasmic side of the inner membrane.</text>
</comment>
<comment type="pathway">
    <text evidence="1">Bacterial outer membrane biogenesis; lipopolysaccharide biosynthesis.</text>
</comment>
<comment type="subunit">
    <text evidence="1">Heterodimer of ArnE and ArnF.</text>
</comment>
<comment type="subcellular location">
    <subcellularLocation>
        <location evidence="1">Cell inner membrane</location>
        <topology evidence="1">Multi-pass membrane protein</topology>
    </subcellularLocation>
</comment>
<comment type="similarity">
    <text evidence="1">Belongs to the ArnE family.</text>
</comment>
<organism>
    <name type="scientific">Shigella boydii serotype 18 (strain CDC 3083-94 / BS512)</name>
    <dbReference type="NCBI Taxonomy" id="344609"/>
    <lineage>
        <taxon>Bacteria</taxon>
        <taxon>Pseudomonadati</taxon>
        <taxon>Pseudomonadota</taxon>
        <taxon>Gammaproteobacteria</taxon>
        <taxon>Enterobacterales</taxon>
        <taxon>Enterobacteriaceae</taxon>
        <taxon>Shigella</taxon>
    </lineage>
</organism>
<accession>B2TW41</accession>
<gene>
    <name evidence="1" type="primary">arnE</name>
    <name type="ordered locus">SbBS512_E2634</name>
</gene>
<feature type="chain" id="PRO_0000383004" description="Probable 4-amino-4-deoxy-L-arabinose-phosphoundecaprenol flippase subunit ArnE">
    <location>
        <begin position="1"/>
        <end position="111"/>
    </location>
</feature>
<feature type="transmembrane region" description="Helical" evidence="1">
    <location>
        <begin position="36"/>
        <end position="56"/>
    </location>
</feature>
<feature type="transmembrane region" description="Helical" evidence="1">
    <location>
        <begin position="61"/>
        <end position="81"/>
    </location>
</feature>
<feature type="transmembrane region" description="Helical" evidence="1">
    <location>
        <begin position="88"/>
        <end position="108"/>
    </location>
</feature>
<feature type="domain" description="EamA" evidence="1">
    <location>
        <begin position="40"/>
        <end position="109"/>
    </location>
</feature>
<protein>
    <recommendedName>
        <fullName evidence="1">Probable 4-amino-4-deoxy-L-arabinose-phosphoundecaprenol flippase subunit ArnE</fullName>
        <shortName evidence="1">L-Ara4N-phosphoundecaprenol flippase subunit ArnE</shortName>
    </recommendedName>
    <alternativeName>
        <fullName evidence="1">Undecaprenyl phosphate-aminoarabinose flippase subunit ArnE</fullName>
    </alternativeName>
</protein>
<sequence length="111" mass="12192">MIWLTLVFASLLSVAGQLCQKQATCFVAINKRRKHIVLWLGLALACLGLAMVLWLLVLQNVPVGIAYPMLSLNFVWVTLAAVKLWHEPVSPRHWCGVAFIIGGIVILGSTV</sequence>
<proteinExistence type="inferred from homology"/>
<evidence type="ECO:0000255" key="1">
    <source>
        <dbReference type="HAMAP-Rule" id="MF_01869"/>
    </source>
</evidence>
<reference key="1">
    <citation type="submission" date="2008-05" db="EMBL/GenBank/DDBJ databases">
        <title>Complete sequence of Shigella boydii serotype 18 strain BS512.</title>
        <authorList>
            <person name="Rasko D.A."/>
            <person name="Rosovitz M."/>
            <person name="Maurelli A.T."/>
            <person name="Myers G."/>
            <person name="Seshadri R."/>
            <person name="Cer R."/>
            <person name="Jiang L."/>
            <person name="Ravel J."/>
            <person name="Sebastian Y."/>
        </authorList>
    </citation>
    <scope>NUCLEOTIDE SEQUENCE [LARGE SCALE GENOMIC DNA]</scope>
    <source>
        <strain>CDC 3083-94 / BS512</strain>
    </source>
</reference>
<dbReference type="EMBL" id="CP001063">
    <property type="protein sequence ID" value="ACD08664.1"/>
    <property type="molecule type" value="Genomic_DNA"/>
</dbReference>
<dbReference type="RefSeq" id="WP_000638031.1">
    <property type="nucleotide sequence ID" value="NC_010658.1"/>
</dbReference>
<dbReference type="SMR" id="B2TW41"/>
<dbReference type="STRING" id="344609.SbBS512_E2634"/>
<dbReference type="GeneID" id="93774916"/>
<dbReference type="KEGG" id="sbc:SbBS512_E2634"/>
<dbReference type="HOGENOM" id="CLU_131462_5_1_6"/>
<dbReference type="UniPathway" id="UPA00030"/>
<dbReference type="Proteomes" id="UP000001030">
    <property type="component" value="Chromosome"/>
</dbReference>
<dbReference type="GO" id="GO:0005886">
    <property type="term" value="C:plasma membrane"/>
    <property type="evidence" value="ECO:0007669"/>
    <property type="project" value="UniProtKB-SubCell"/>
</dbReference>
<dbReference type="GO" id="GO:1901505">
    <property type="term" value="F:carbohydrate derivative transmembrane transporter activity"/>
    <property type="evidence" value="ECO:0007669"/>
    <property type="project" value="InterPro"/>
</dbReference>
<dbReference type="GO" id="GO:0009245">
    <property type="term" value="P:lipid A biosynthetic process"/>
    <property type="evidence" value="ECO:0007669"/>
    <property type="project" value="UniProtKB-UniRule"/>
</dbReference>
<dbReference type="GO" id="GO:0009103">
    <property type="term" value="P:lipopolysaccharide biosynthetic process"/>
    <property type="evidence" value="ECO:0007669"/>
    <property type="project" value="UniProtKB-UniRule"/>
</dbReference>
<dbReference type="FunFam" id="1.10.3730.20:FF:000002">
    <property type="entry name" value="Probable 4-amino-4-deoxy-L-arabinose-phosphoundecaprenol flippase subunit ArnE"/>
    <property type="match status" value="1"/>
</dbReference>
<dbReference type="Gene3D" id="1.10.3730.20">
    <property type="match status" value="1"/>
</dbReference>
<dbReference type="HAMAP" id="MF_01869">
    <property type="entry name" value="Flippase_ArnE"/>
    <property type="match status" value="1"/>
</dbReference>
<dbReference type="InterPro" id="IPR000620">
    <property type="entry name" value="EamA_dom"/>
</dbReference>
<dbReference type="InterPro" id="IPR022883">
    <property type="entry name" value="Flippase_ArnE"/>
</dbReference>
<dbReference type="InterPro" id="IPR000390">
    <property type="entry name" value="Small_drug/metabolite_transptr"/>
</dbReference>
<dbReference type="NCBIfam" id="NF011625">
    <property type="entry name" value="PRK15051.1"/>
    <property type="match status" value="1"/>
</dbReference>
<dbReference type="PANTHER" id="PTHR30561:SF23">
    <property type="entry name" value="4-AMINO-4-DEOXY-L-ARABINOSE-PHOSPHOUNDECAPRENOL FLIPPASE SUBUNIT ARNE-RELATED"/>
    <property type="match status" value="1"/>
</dbReference>
<dbReference type="PANTHER" id="PTHR30561">
    <property type="entry name" value="SMR FAMILY PROTON-DEPENDENT DRUG EFFLUX TRANSPORTER SUGE"/>
    <property type="match status" value="1"/>
</dbReference>
<dbReference type="Pfam" id="PF00892">
    <property type="entry name" value="EamA"/>
    <property type="match status" value="1"/>
</dbReference>
<dbReference type="SUPFAM" id="SSF103481">
    <property type="entry name" value="Multidrug resistance efflux transporter EmrE"/>
    <property type="match status" value="1"/>
</dbReference>